<sequence>MPIAVGMIETLGFPAVVEAADAMVKAARVTLVGYEKIGSGRVTVIVRGDVSEVQASVSAGLDSAKRVAGGEVLSHHIIARPHENLEYVLPIRYTEAVEQFRM</sequence>
<proteinExistence type="evidence at protein level"/>
<protein>
    <recommendedName>
        <fullName evidence="15">Carboxysome shell protein CcmK2</fullName>
    </recommendedName>
    <alternativeName>
        <fullName>Carbon dioxide-concentrating mechanism protein CcmK2</fullName>
    </alternativeName>
</protein>
<comment type="function">
    <text evidence="1">One of the shell proteins of the carboxysome, a polyhedral inclusion where RuBisCO (ribulose bisphosphate carboxylase, rbcL-rbcS) is sequestered. Assembles into hexamers which make sheets that form the facets of the polyhedral carboxysome. The hexamer central pore probably regulates metabolite flux.</text>
</comment>
<comment type="function">
    <text evidence="5 6 7 8">The major shell protein of the carboxysome, a polyhedral inclusion where RuBisCO (ribulose bisphosphate carboxylase, rbcL-rbcS) is sequestered. Hexamers make sheets that form the facets of the polyhedral carboxysome (PubMed:22928045). The shell is 4.5 nm thick, as observed for CcmK hexamers (PubMed:28616951). Required for recruitment of CcmO to the pre-carboxysome (PubMed:22928045, PubMed:24267892). In PCC 7942 there are several CcmK paralogs with presumably functional differences; replacing the central pore residues (34-37) with those of either CcmK4 from this organism (Tyr-Met-Arg-Ala) or from an alpha-type carboxysome forming cyanobacterium (CsoS1 of P.marinus strain MIT 9313, Arg-Glu-Phe-Val) allows the bacterium to make carboxysomes, but the expression level is too low to know if the carboxysome is functional for CO(2) fixation (PubMed:25117559).</text>
</comment>
<comment type="function">
    <text evidence="6">Beta-carboxysome assembly initiates when soluble RuBisCO is condensed into a liquid matrix in a pre-carboxysome by the RbcS-like domains of probably both CcmM58 and CcmM35. CcmN interacts with the N-terminus of CcmM58, and then recruits the CcmK2 major shell protein via CcmN's encapsulation peptide. Shell formation requires CcmK proteins and CcmO. CcmL caps the otherwise elongated carboxysome. Once fully encapsulated carboxysomes are formed, they migrate within the cell probably via interactions with the cytoskeleton.</text>
</comment>
<comment type="subunit">
    <text evidence="4 5 7 10">Homohexamer (PubMed:25117559, PubMed:30389783). Interacts with CcmO in the carboxysome (PubMed:22928045). Interacts with CcmN (PubMed:22461622).</text>
</comment>
<comment type="subcellular location">
    <subcellularLocation>
        <location evidence="1 2 3 5 6 7 8 11">Carboxysome</location>
    </subcellularLocation>
    <text evidence="5 7">This cyanobacterium makes beta-type carboxysomes.</text>
</comment>
<comment type="domain">
    <text evidence="7">The tight homohexamer forms a pore with an opening of about 5 Angstroms in diameter and is positively charged.</text>
</comment>
<comment type="disruption phenotype">
    <text evidence="5 6 7 12">Cells do not grow in normal air but do grow on 2% CO(2), called a high-CO(2) requiring phenotype, HCR (PubMed:22928045, PubMed:8491708). Cells make aberrantly large polar bodies instead of wild-type carboxysomes, no accumulation of CcmO (PubMed:22928045, PubMed:24267892). An alternatively generated deletion mutant does not form abnormal polar bodies (PubMed:25117559).</text>
</comment>
<comment type="biotechnology">
    <text evidence="9">Heterologous expression of 12 carboxysomal genes in E.coli (ccaA, ccmK2, ccmK3, ccmK4, ccmL, ccmM, ccmN, ccmO, ccmP, rbcL, rbcS, rbcX) leads to the formation of bodies that resemble carboxysomes, have densely packed paracrystalline arrays and RuBisCO activity. These structures open the door to generating carboxysomes in plant cells to increase their photosynthesis and productivity, as well as tailoring bacterial microcompartments to specific metabolic needs and molecule delivery.</text>
</comment>
<comment type="similarity">
    <text evidence="1">Belongs to the bacterial microcompartments protein family. CcmK subfamily.</text>
</comment>
<comment type="online information" name="Protein Spotlight">
    <link uri="https://www.proteinspotlight.org/back_issues/237/"/>
    <text>A peculiar architecture - Issue 237 of June 2021</text>
</comment>
<organism>
    <name type="scientific">Synechococcus elongatus (strain ATCC 33912 / PCC 7942 / FACHB-805)</name>
    <name type="common">Anacystis nidulans R2</name>
    <dbReference type="NCBI Taxonomy" id="1140"/>
    <lineage>
        <taxon>Bacteria</taxon>
        <taxon>Bacillati</taxon>
        <taxon>Cyanobacteriota</taxon>
        <taxon>Cyanophyceae</taxon>
        <taxon>Synechococcales</taxon>
        <taxon>Synechococcaceae</taxon>
        <taxon>Synechococcus</taxon>
    </lineage>
</organism>
<dbReference type="EMBL" id="M96929">
    <property type="protein sequence ID" value="AAA27304.1"/>
    <property type="molecule type" value="Genomic_DNA"/>
</dbReference>
<dbReference type="EMBL" id="CP000100">
    <property type="protein sequence ID" value="ABB57451.1"/>
    <property type="molecule type" value="Genomic_DNA"/>
</dbReference>
<dbReference type="PIR" id="B36904">
    <property type="entry name" value="B36904"/>
</dbReference>
<dbReference type="RefSeq" id="WP_011242449.1">
    <property type="nucleotide sequence ID" value="NZ_JACJTX010000004.1"/>
</dbReference>
<dbReference type="PDB" id="4OX7">
    <property type="method" value="X-ray"/>
    <property type="resolution" value="2.10 A"/>
    <property type="chains" value="A/B/C/D/E/F=1-102"/>
</dbReference>
<dbReference type="PDBsum" id="4OX7"/>
<dbReference type="SMR" id="Q03511"/>
<dbReference type="STRING" id="1140.Synpcc7942_1421"/>
<dbReference type="PaxDb" id="1140-Synpcc7942_1421"/>
<dbReference type="KEGG" id="syf:Synpcc7942_1421"/>
<dbReference type="eggNOG" id="COG4577">
    <property type="taxonomic scope" value="Bacteria"/>
</dbReference>
<dbReference type="HOGENOM" id="CLU_064903_5_3_3"/>
<dbReference type="OrthoDB" id="5296101at2"/>
<dbReference type="BioCyc" id="SYNEL:SYNPCC7942_1421-MONOMER"/>
<dbReference type="EvolutionaryTrace" id="Q03511"/>
<dbReference type="Proteomes" id="UP000889800">
    <property type="component" value="Chromosome"/>
</dbReference>
<dbReference type="GO" id="GO:0031470">
    <property type="term" value="C:carboxysome"/>
    <property type="evidence" value="ECO:0000314"/>
    <property type="project" value="UniProtKB"/>
</dbReference>
<dbReference type="GO" id="GO:0043886">
    <property type="term" value="F:structural constituent of carboxysome shell"/>
    <property type="evidence" value="ECO:0000314"/>
    <property type="project" value="UniProtKB"/>
</dbReference>
<dbReference type="GO" id="GO:0015977">
    <property type="term" value="P:carbon fixation"/>
    <property type="evidence" value="ECO:0007669"/>
    <property type="project" value="UniProtKB-UniRule"/>
</dbReference>
<dbReference type="GO" id="GO:0015979">
    <property type="term" value="P:photosynthesis"/>
    <property type="evidence" value="ECO:0007669"/>
    <property type="project" value="UniProtKB-KW"/>
</dbReference>
<dbReference type="CDD" id="cd07057">
    <property type="entry name" value="BMC_CcmK"/>
    <property type="match status" value="1"/>
</dbReference>
<dbReference type="FunFam" id="3.30.70.1710:FF:000001">
    <property type="entry name" value="Ethanolamine utilization protein EutM"/>
    <property type="match status" value="1"/>
</dbReference>
<dbReference type="Gene3D" id="3.30.70.1710">
    <property type="match status" value="1"/>
</dbReference>
<dbReference type="HAMAP" id="MF_00854">
    <property type="entry name" value="CcmK"/>
    <property type="match status" value="1"/>
</dbReference>
<dbReference type="InterPro" id="IPR020808">
    <property type="entry name" value="Bact_microcomp_CS"/>
</dbReference>
<dbReference type="InterPro" id="IPR000249">
    <property type="entry name" value="BMC_dom"/>
</dbReference>
<dbReference type="InterPro" id="IPR050575">
    <property type="entry name" value="BMC_shell"/>
</dbReference>
<dbReference type="InterPro" id="IPR046380">
    <property type="entry name" value="CcmK"/>
</dbReference>
<dbReference type="InterPro" id="IPR037233">
    <property type="entry name" value="CcmK-like_sf"/>
</dbReference>
<dbReference type="InterPro" id="IPR044872">
    <property type="entry name" value="CcmK/CsoS1_BMC"/>
</dbReference>
<dbReference type="PANTHER" id="PTHR33941:SF13">
    <property type="entry name" value="CARBOXYSOME SHELL PROTEIN CCMK4"/>
    <property type="match status" value="1"/>
</dbReference>
<dbReference type="PANTHER" id="PTHR33941">
    <property type="entry name" value="PROPANEDIOL UTILIZATION PROTEIN PDUA"/>
    <property type="match status" value="1"/>
</dbReference>
<dbReference type="Pfam" id="PF00936">
    <property type="entry name" value="BMC"/>
    <property type="match status" value="1"/>
</dbReference>
<dbReference type="SMART" id="SM00877">
    <property type="entry name" value="BMC"/>
    <property type="match status" value="1"/>
</dbReference>
<dbReference type="SUPFAM" id="SSF143414">
    <property type="entry name" value="CcmK-like"/>
    <property type="match status" value="1"/>
</dbReference>
<dbReference type="PROSITE" id="PS01139">
    <property type="entry name" value="BMC_1"/>
    <property type="match status" value="1"/>
</dbReference>
<dbReference type="PROSITE" id="PS51930">
    <property type="entry name" value="BMC_2"/>
    <property type="match status" value="1"/>
</dbReference>
<reference key="1">
    <citation type="journal article" date="1993" name="J. Bacteriol.">
        <title>Analysis of a genomic DNA region from the cyanobacterium Synechococcus sp. strain PCC7942 involved in carboxysome assembly and function.</title>
        <authorList>
            <person name="Price G.D."/>
            <person name="Howitt S.M."/>
            <person name="Harrison K."/>
            <person name="Badger M.R."/>
        </authorList>
    </citation>
    <scope>NUCLEOTIDE SEQUENCE [GENOMIC DNA]</scope>
    <scope>DISRUPTION PHENOTYPE</scope>
    <source>
        <strain>ATCC 33912 / PCC 7942 / FACHB-805</strain>
    </source>
</reference>
<reference key="2">
    <citation type="submission" date="2005-08" db="EMBL/GenBank/DDBJ databases">
        <title>Complete sequence of chromosome 1 of Synechococcus elongatus PCC 7942.</title>
        <authorList>
            <consortium name="US DOE Joint Genome Institute"/>
            <person name="Copeland A."/>
            <person name="Lucas S."/>
            <person name="Lapidus A."/>
            <person name="Barry K."/>
            <person name="Detter J.C."/>
            <person name="Glavina T."/>
            <person name="Hammon N."/>
            <person name="Israni S."/>
            <person name="Pitluck S."/>
            <person name="Schmutz J."/>
            <person name="Larimer F."/>
            <person name="Land M."/>
            <person name="Kyrpides N."/>
            <person name="Lykidis A."/>
            <person name="Golden S."/>
            <person name="Richardson P."/>
        </authorList>
    </citation>
    <scope>NUCLEOTIDE SEQUENCE [LARGE SCALE GENOMIC DNA]</scope>
    <source>
        <strain>ATCC 33912 / PCC 7942 / FACHB-805</strain>
    </source>
</reference>
<reference key="3">
    <citation type="journal article" date="2007" name="J. Biol. Chem.">
        <title>Analysis of carboxysomes from Synechococcus PCC7942 reveals multiple Rubisco complexes with carboxysomal proteins CcmM and CcaA.</title>
        <authorList>
            <person name="Long B.M."/>
            <person name="Badger M.R."/>
            <person name="Whitney S.M."/>
            <person name="Price G.D."/>
        </authorList>
    </citation>
    <scope>SUBCELLULAR LOCATION</scope>
    <source>
        <strain>ATCC 33912 / PCC 7942 / FACHB-805</strain>
    </source>
</reference>
<reference key="4">
    <citation type="journal article" date="2010" name="Plant Physiol.">
        <title>Functional cyanobacterial beta-carboxysomes have an absolute requirement for both long and short forms of the CcmM protein.</title>
        <authorList>
            <person name="Long B.M."/>
            <person name="Tucker L."/>
            <person name="Badger M.R."/>
            <person name="Price G.D."/>
        </authorList>
    </citation>
    <scope>SUBCELLULAR LOCATION</scope>
    <source>
        <strain>ATCC 33912 / PCC 7942 / FACHB-805</strain>
    </source>
</reference>
<reference key="5">
    <citation type="journal article" date="2012" name="PLoS ONE">
        <title>Structural determinants of the outer shell of beta-carboxysomes in Synechococcus elongatus PCC 7942: roles for CcmK2, K3-K4, CcmO, and CcmL.</title>
        <authorList>
            <person name="Rae B.D."/>
            <person name="Long B.M."/>
            <person name="Badger M.R."/>
            <person name="Price G.D."/>
        </authorList>
    </citation>
    <scope>FUNCTION</scope>
    <scope>INTERACTION WITH CCMO</scope>
    <scope>SUBCELLULAR LOCATION</scope>
    <scope>DISRUPTION PHENOTYPE</scope>
    <source>
        <strain>ATCC 33912 / PCC 7942 / FACHB-805</strain>
    </source>
</reference>
<reference key="6">
    <citation type="journal article" date="2012" name="J. Biol. Chem.">
        <title>Elucidating essential role of conserved carboxysomal protein CcmN reveals common feature of bacterial microcompartment assembly.</title>
        <authorList>
            <person name="Kinney J.N."/>
            <person name="Salmeen A."/>
            <person name="Cai F."/>
            <person name="Kerfeld C.A."/>
        </authorList>
    </citation>
    <scope>INTERACTION WITH CCMN</scope>
    <source>
        <strain>ATCC 33912 / PCC 7942 / FACHB-805</strain>
    </source>
</reference>
<reference key="7">
    <citation type="journal article" date="2013" name="Cell">
        <title>Biogenesis of a bacterial organelle: the carboxysome assembly pathway.</title>
        <authorList>
            <person name="Cameron J.C."/>
            <person name="Wilson S.C."/>
            <person name="Bernstein S.L."/>
            <person name="Kerfeld C.A."/>
        </authorList>
    </citation>
    <scope>CARBOXYSOME ASSEMBLY PROCESS</scope>
    <scope>FUNCTION</scope>
    <scope>SUBCELLULAR LOCATION</scope>
    <source>
        <strain>ATCC 33912 / PCC 7942 / FACHB-805</strain>
    </source>
</reference>
<reference key="8">
    <citation type="journal article" date="2017" name="Nanoscale">
        <title>Direct characterization of the native structure and mechanics of cyanobacterial carboxysomes.</title>
        <authorList>
            <person name="Faulkner M."/>
            <person name="Rodriguez-Ramos J."/>
            <person name="Dykes G.F."/>
            <person name="Owen S.V."/>
            <person name="Casella S."/>
            <person name="Simpson D.M."/>
            <person name="Beynon R.J."/>
            <person name="Liu L.N."/>
        </authorList>
    </citation>
    <scope>SUBCELLULAR LOCATION</scope>
    <source>
        <strain>ATCC 33912 / PCC 7942 / FACHB-805</strain>
    </source>
</reference>
<reference key="9">
    <citation type="journal article" date="2018" name="Front. Plant Sci.">
        <title>Engineering and Modulating Functional Cyanobacterial CO2-Fixing Organelles.</title>
        <authorList>
            <person name="Fang Y."/>
            <person name="Huang F."/>
            <person name="Faulkner M."/>
            <person name="Jiang Q."/>
            <person name="Dykes G.F."/>
            <person name="Yang M."/>
            <person name="Liu L.N."/>
        </authorList>
    </citation>
    <scope>BIOTECHNOLOGY</scope>
    <source>
        <strain>ATCC 33912 / PCC 7942 / FACHB-805</strain>
    </source>
</reference>
<reference key="10">
    <citation type="journal article" date="2019" name="Plant Cell">
        <title>Single-Organelle Quantification Reveals Stoichiometric and Structural Variability of Carboxysomes Dependent on the Environment.</title>
        <authorList>
            <person name="Sun Y."/>
            <person name="Wollman A.J.M."/>
            <person name="Huang F."/>
            <person name="Leake M.C."/>
            <person name="Liu L.N."/>
        </authorList>
    </citation>
    <scope>SUBCELLULAR LOCATION</scope>
    <source>
        <strain>ATCC 33912 / PCC 7942 / FACHB-805</strain>
    </source>
</reference>
<reference key="11">
    <citation type="journal article" date="2019" name="Plant Physiol.">
        <title>Heterohexamers Formed by CcmK3 and CcmK4 Increase the Complexity of Beta Carboxysome Shells.</title>
        <authorList>
            <person name="Sommer M."/>
            <person name="Sutter M."/>
            <person name="Gupta S."/>
            <person name="Kirst H."/>
            <person name="Turmo A."/>
            <person name="Lechno-Yossef S."/>
            <person name="Burton R.L."/>
            <person name="Saechao C."/>
            <person name="Sloan N.B."/>
            <person name="Cheng X."/>
            <person name="Chan L.G."/>
            <person name="Petzold C.J."/>
            <person name="Fuentes-Cabrera M."/>
            <person name="Ralston C.Y."/>
            <person name="Kerfeld C.A."/>
        </authorList>
    </citation>
    <scope>SUBUNIT</scope>
</reference>
<reference evidence="17" key="12">
    <citation type="journal article" date="2015" name="ACS Synth. Biol.">
        <title>Engineering bacterial microcompartment shells: chimeric shell proteins and chimeric carboxysome shells.</title>
        <authorList>
            <person name="Cai F."/>
            <person name="Sutter M."/>
            <person name="Bernstein S.L."/>
            <person name="Kinney J.N."/>
            <person name="Kerfeld C.A."/>
        </authorList>
    </citation>
    <scope>X-RAY CRYSTALLOGRAPHY (2.10 ANGSTROMS)</scope>
    <scope>SUBUNIT</scope>
    <scope>SUBCELLULAR LOCATION</scope>
    <scope>DOMAIN</scope>
    <scope>DISRUPTION PHENOTYPE</scope>
    <scope>MUTAGENESIS OF 34-TYR--ILE-37 AND 35-GLU--ILE-37</scope>
</reference>
<accession>Q03511</accession>
<accession>Q31NB8</accession>
<gene>
    <name evidence="15" type="primary">ccmK2</name>
    <name evidence="16" type="synonym">ccmK</name>
    <name evidence="13 14" type="synonym">ccmK1</name>
    <name type="ordered locus">Synpcc7942_1421</name>
</gene>
<feature type="chain" id="PRO_0000201503" description="Carboxysome shell protein CcmK2">
    <location>
        <begin position="1"/>
        <end position="102"/>
    </location>
</feature>
<feature type="domain" description="BMC" evidence="1">
    <location>
        <begin position="4"/>
        <end position="90"/>
    </location>
</feature>
<feature type="mutagenesis site" description="Probably alters pore properties, is able to form carboxysomes, residues correspond to CsoS1 of P.marinus MIT 9313." evidence="7">
    <original>YEKI</original>
    <variation>REFV</variation>
    <location>
        <begin position="34"/>
        <end position="37"/>
    </location>
</feature>
<feature type="mutagenesis site" description="Probably alters pore properties, is able to form carboxysomes, residues correspond to CcmK4 of this organism." evidence="7">
    <original>EKI</original>
    <variation>MRA</variation>
    <location>
        <begin position="35"/>
        <end position="37"/>
    </location>
</feature>
<feature type="strand" evidence="18">
    <location>
        <begin position="4"/>
        <end position="12"/>
    </location>
</feature>
<feature type="helix" evidence="18">
    <location>
        <begin position="13"/>
        <end position="26"/>
    </location>
</feature>
<feature type="strand" evidence="18">
    <location>
        <begin position="27"/>
        <end position="38"/>
    </location>
</feature>
<feature type="strand" evidence="18">
    <location>
        <begin position="41"/>
        <end position="48"/>
    </location>
</feature>
<feature type="helix" evidence="18">
    <location>
        <begin position="50"/>
        <end position="64"/>
    </location>
</feature>
<feature type="strand" evidence="18">
    <location>
        <begin position="72"/>
        <end position="80"/>
    </location>
</feature>
<feature type="helix" evidence="18">
    <location>
        <begin position="85"/>
        <end position="87"/>
    </location>
</feature>
<feature type="helix" evidence="18">
    <location>
        <begin position="95"/>
        <end position="100"/>
    </location>
</feature>
<keyword id="KW-0002">3D-structure</keyword>
<keyword id="KW-1283">Bacterial microcompartment</keyword>
<keyword id="KW-0120">Carbon dioxide fixation</keyword>
<keyword id="KW-1282">Carboxysome</keyword>
<keyword id="KW-0602">Photosynthesis</keyword>
<keyword id="KW-1185">Reference proteome</keyword>
<evidence type="ECO:0000255" key="1">
    <source>
        <dbReference type="HAMAP-Rule" id="MF_00854"/>
    </source>
</evidence>
<evidence type="ECO:0000269" key="2">
    <source>
    </source>
</evidence>
<evidence type="ECO:0000269" key="3">
    <source>
    </source>
</evidence>
<evidence type="ECO:0000269" key="4">
    <source>
    </source>
</evidence>
<evidence type="ECO:0000269" key="5">
    <source>
    </source>
</evidence>
<evidence type="ECO:0000269" key="6">
    <source>
    </source>
</evidence>
<evidence type="ECO:0000269" key="7">
    <source>
    </source>
</evidence>
<evidence type="ECO:0000269" key="8">
    <source>
    </source>
</evidence>
<evidence type="ECO:0000269" key="9">
    <source>
    </source>
</evidence>
<evidence type="ECO:0000269" key="10">
    <source>
    </source>
</evidence>
<evidence type="ECO:0000269" key="11">
    <source>
    </source>
</evidence>
<evidence type="ECO:0000269" key="12">
    <source>
    </source>
</evidence>
<evidence type="ECO:0000303" key="13">
    <source>
    </source>
</evidence>
<evidence type="ECO:0000303" key="14">
    <source>
    </source>
</evidence>
<evidence type="ECO:0000303" key="15">
    <source>
    </source>
</evidence>
<evidence type="ECO:0000303" key="16">
    <source>
    </source>
</evidence>
<evidence type="ECO:0007744" key="17">
    <source>
        <dbReference type="PDB" id="4OX7"/>
    </source>
</evidence>
<evidence type="ECO:0007829" key="18">
    <source>
        <dbReference type="PDB" id="4OX7"/>
    </source>
</evidence>
<name>CCMK2_SYNE7</name>